<keyword id="KW-0560">Oxidoreductase</keyword>
<keyword id="KW-0670">Pyruvate</keyword>
<keyword id="KW-0786">Thiamine pyrophosphate</keyword>
<name>ODPA_RICTY</name>
<organism>
    <name type="scientific">Rickettsia typhi (strain ATCC VR-144 / Wilmington)</name>
    <dbReference type="NCBI Taxonomy" id="257363"/>
    <lineage>
        <taxon>Bacteria</taxon>
        <taxon>Pseudomonadati</taxon>
        <taxon>Pseudomonadota</taxon>
        <taxon>Alphaproteobacteria</taxon>
        <taxon>Rickettsiales</taxon>
        <taxon>Rickettsiaceae</taxon>
        <taxon>Rickettsieae</taxon>
        <taxon>Rickettsia</taxon>
        <taxon>typhus group</taxon>
    </lineage>
</organism>
<protein>
    <recommendedName>
        <fullName>Pyruvate dehydrogenase E1 component subunit alpha</fullName>
        <ecNumber>1.2.4.1</ecNumber>
    </recommendedName>
</protein>
<sequence length="326" mass="36905">MNIKPKKYKPIKEEYIKSFKDMLLLRRFEEKCGQLYGMGEIGGFCHLYIGQEAVISAVELIKKKGDSTITSYRDHAHIILAGTEPKYVLAELMGRATGCSKGKGGSMHLFDIPNKFYGGHGIVGAQVPIGTGLAFAEKYNGTNNICFTFLGDGAVNQGQVYEAFNMASLWGLPVVYIIENNEYSMGTSVSRSTFMRDLYKKGESFGIRGFQLDGMDFEEMYNGTKQVAEYVRENSFPVILEVKTYRYRGHSMSDPAKYRSKEEVAKYKERDTLVRIRQIILDNKYATEEDLKAIERSVQEVIKVAVEFSENSPLPSEDELYTDIYV</sequence>
<dbReference type="EC" id="1.2.4.1"/>
<dbReference type="EMBL" id="AE017197">
    <property type="protein sequence ID" value="AAU03733.1"/>
    <property type="molecule type" value="Genomic_DNA"/>
</dbReference>
<dbReference type="RefSeq" id="WP_011190718.1">
    <property type="nucleotide sequence ID" value="NC_006142.1"/>
</dbReference>
<dbReference type="SMR" id="Q68XA9"/>
<dbReference type="KEGG" id="rty:RT0252"/>
<dbReference type="eggNOG" id="COG1071">
    <property type="taxonomic scope" value="Bacteria"/>
</dbReference>
<dbReference type="HOGENOM" id="CLU_029393_5_0_5"/>
<dbReference type="OrthoDB" id="9766715at2"/>
<dbReference type="Proteomes" id="UP000000604">
    <property type="component" value="Chromosome"/>
</dbReference>
<dbReference type="GO" id="GO:0043231">
    <property type="term" value="C:intracellular membrane-bounded organelle"/>
    <property type="evidence" value="ECO:0007669"/>
    <property type="project" value="InterPro"/>
</dbReference>
<dbReference type="GO" id="GO:0004739">
    <property type="term" value="F:pyruvate dehydrogenase (acetyl-transferring) activity"/>
    <property type="evidence" value="ECO:0007669"/>
    <property type="project" value="UniProtKB-EC"/>
</dbReference>
<dbReference type="GO" id="GO:0006086">
    <property type="term" value="P:pyruvate decarboxylation to acetyl-CoA"/>
    <property type="evidence" value="ECO:0007669"/>
    <property type="project" value="InterPro"/>
</dbReference>
<dbReference type="CDD" id="cd02000">
    <property type="entry name" value="TPP_E1_PDC_ADC_BCADC"/>
    <property type="match status" value="1"/>
</dbReference>
<dbReference type="FunFam" id="3.40.50.970:FF:000013">
    <property type="entry name" value="Pyruvate dehydrogenase E1 component subunit alpha"/>
    <property type="match status" value="1"/>
</dbReference>
<dbReference type="Gene3D" id="3.40.50.970">
    <property type="match status" value="1"/>
</dbReference>
<dbReference type="InterPro" id="IPR001017">
    <property type="entry name" value="DH_E1"/>
</dbReference>
<dbReference type="InterPro" id="IPR050642">
    <property type="entry name" value="PDH_E1_Alpha_Subunit"/>
</dbReference>
<dbReference type="InterPro" id="IPR017597">
    <property type="entry name" value="Pyrv_DH_E1_asu_subgrp-y"/>
</dbReference>
<dbReference type="InterPro" id="IPR029061">
    <property type="entry name" value="THDP-binding"/>
</dbReference>
<dbReference type="NCBIfam" id="TIGR03182">
    <property type="entry name" value="PDH_E1_alph_y"/>
    <property type="match status" value="1"/>
</dbReference>
<dbReference type="PANTHER" id="PTHR11516:SF60">
    <property type="entry name" value="PYRUVATE DEHYDROGENASE E1 COMPONENT SUBUNIT ALPHA"/>
    <property type="match status" value="1"/>
</dbReference>
<dbReference type="PANTHER" id="PTHR11516">
    <property type="entry name" value="PYRUVATE DEHYDROGENASE E1 COMPONENT, ALPHA SUBUNIT BACTERIAL AND ORGANELLAR"/>
    <property type="match status" value="1"/>
</dbReference>
<dbReference type="Pfam" id="PF00676">
    <property type="entry name" value="E1_dh"/>
    <property type="match status" value="1"/>
</dbReference>
<dbReference type="SUPFAM" id="SSF52518">
    <property type="entry name" value="Thiamin diphosphate-binding fold (THDP-binding)"/>
    <property type="match status" value="1"/>
</dbReference>
<proteinExistence type="inferred from homology"/>
<comment type="function">
    <text evidence="1">The pyruvate dehydrogenase complex catalyzes the overall conversion of pyruvate to acetyl-CoA and CO(2). It contains multiple copies of three enzymatic components: pyruvate dehydrogenase (E1), dihydrolipoamide acetyltransferase (E2) and lipoamide dehydrogenase (E3) (By similarity).</text>
</comment>
<comment type="catalytic activity">
    <reaction>
        <text>N(6)-[(R)-lipoyl]-L-lysyl-[protein] + pyruvate + H(+) = N(6)-[(R)-S(8)-acetyldihydrolipoyl]-L-lysyl-[protein] + CO2</text>
        <dbReference type="Rhea" id="RHEA:19189"/>
        <dbReference type="Rhea" id="RHEA-COMP:10474"/>
        <dbReference type="Rhea" id="RHEA-COMP:10478"/>
        <dbReference type="ChEBI" id="CHEBI:15361"/>
        <dbReference type="ChEBI" id="CHEBI:15378"/>
        <dbReference type="ChEBI" id="CHEBI:16526"/>
        <dbReference type="ChEBI" id="CHEBI:83099"/>
        <dbReference type="ChEBI" id="CHEBI:83111"/>
        <dbReference type="EC" id="1.2.4.1"/>
    </reaction>
</comment>
<comment type="cofactor">
    <cofactor evidence="1">
        <name>thiamine diphosphate</name>
        <dbReference type="ChEBI" id="CHEBI:58937"/>
    </cofactor>
</comment>
<comment type="subunit">
    <text>Heterodimer of an alpha and a beta chain.</text>
</comment>
<accession>Q68XA9</accession>
<evidence type="ECO:0000250" key="1"/>
<feature type="chain" id="PRO_0000288754" description="Pyruvate dehydrogenase E1 component subunit alpha">
    <location>
        <begin position="1"/>
        <end position="326"/>
    </location>
</feature>
<gene>
    <name type="primary">pdhA</name>
    <name type="ordered locus">RT0252</name>
</gene>
<reference key="1">
    <citation type="journal article" date="2004" name="J. Bacteriol.">
        <title>Complete genome sequence of Rickettsia typhi and comparison with sequences of other Rickettsiae.</title>
        <authorList>
            <person name="McLeod M.P."/>
            <person name="Qin X."/>
            <person name="Karpathy S.E."/>
            <person name="Gioia J."/>
            <person name="Highlander S.K."/>
            <person name="Fox G.E."/>
            <person name="McNeill T.Z."/>
            <person name="Jiang H."/>
            <person name="Muzny D."/>
            <person name="Jacob L.S."/>
            <person name="Hawes A.C."/>
            <person name="Sodergren E."/>
            <person name="Gill R."/>
            <person name="Hume J."/>
            <person name="Morgan M."/>
            <person name="Fan G."/>
            <person name="Amin A.G."/>
            <person name="Gibbs R.A."/>
            <person name="Hong C."/>
            <person name="Yu X.-J."/>
            <person name="Walker D.H."/>
            <person name="Weinstock G.M."/>
        </authorList>
    </citation>
    <scope>NUCLEOTIDE SEQUENCE [LARGE SCALE GENOMIC DNA]</scope>
    <source>
        <strain>ATCC VR-144 / Wilmington</strain>
    </source>
</reference>